<organismHost>
    <name type="scientific">Lepidoptera</name>
    <name type="common">butterflies and moths</name>
    <dbReference type="NCBI Taxonomy" id="7088"/>
</organismHost>
<accession>P41471</accession>
<dbReference type="EMBL" id="L22858">
    <property type="protein sequence ID" value="AAA66702.1"/>
    <property type="molecule type" value="Genomic_DNA"/>
</dbReference>
<dbReference type="PIR" id="A72859">
    <property type="entry name" value="A72859"/>
</dbReference>
<dbReference type="RefSeq" id="NP_054102.1">
    <property type="nucleotide sequence ID" value="NC_001623.1"/>
</dbReference>
<dbReference type="GeneID" id="1403905"/>
<dbReference type="KEGG" id="vg:1403905"/>
<dbReference type="OrthoDB" id="41467at10239"/>
<dbReference type="Proteomes" id="UP000008292">
    <property type="component" value="Segment"/>
</dbReference>
<dbReference type="InterPro" id="IPR022621">
    <property type="entry name" value="AcMNPV_Orf72"/>
</dbReference>
<dbReference type="Pfam" id="PF10870">
    <property type="entry name" value="DUF2729"/>
    <property type="match status" value="1"/>
</dbReference>
<sequence>MTKKLLTYCKVKLVKGFSKKFASLFCRCVVSHLSDEDDSDGDRYYQYNNNCNFIYINIVK</sequence>
<feature type="chain" id="PRO_0000133010" description="Uncharacterized 7.1 kDa protein in IAP2-VLF1 intergenic region">
    <location>
        <begin position="1"/>
        <end position="60"/>
    </location>
</feature>
<name>Y072_NPVAC</name>
<organism>
    <name type="scientific">Autographa californica nuclear polyhedrosis virus</name>
    <name type="common">AcMNPV</name>
    <dbReference type="NCBI Taxonomy" id="46015"/>
    <lineage>
        <taxon>Viruses</taxon>
        <taxon>Viruses incertae sedis</taxon>
        <taxon>Naldaviricetes</taxon>
        <taxon>Lefavirales</taxon>
        <taxon>Baculoviridae</taxon>
        <taxon>Alphabaculovirus</taxon>
        <taxon>Alphabaculovirus aucalifornicae</taxon>
    </lineage>
</organism>
<protein>
    <recommendedName>
        <fullName>Uncharacterized 7.1 kDa protein in IAP2-VLF1 intergenic region</fullName>
    </recommendedName>
</protein>
<reference key="1">
    <citation type="journal article" date="1994" name="Virology">
        <title>The complete DNA sequence of Autographa californica nuclear polyhedrosis virus.</title>
        <authorList>
            <person name="Ayres M.D."/>
            <person name="Howard S.C."/>
            <person name="Kuzio J."/>
            <person name="Lopez-Ferber M."/>
            <person name="Possee R.D."/>
        </authorList>
    </citation>
    <scope>NUCLEOTIDE SEQUENCE [LARGE SCALE GENOMIC DNA]</scope>
    <source>
        <strain>C6</strain>
    </source>
</reference>
<keyword id="KW-1185">Reference proteome</keyword>
<proteinExistence type="predicted"/>